<organism>
    <name type="scientific">Buchnera aphidicola subsp. Thelaxes suberi</name>
    <dbReference type="NCBI Taxonomy" id="98797"/>
    <lineage>
        <taxon>Bacteria</taxon>
        <taxon>Pseudomonadati</taxon>
        <taxon>Pseudomonadota</taxon>
        <taxon>Gammaproteobacteria</taxon>
        <taxon>Enterobacterales</taxon>
        <taxon>Erwiniaceae</taxon>
        <taxon>Buchnera</taxon>
    </lineage>
</organism>
<feature type="chain" id="PRO_0000140341" description="2-isopropylmalate synthase">
    <location>
        <begin position="1" status="less than"/>
        <end position="375"/>
    </location>
</feature>
<feature type="domain" description="Pyruvate carboxyltransferase" evidence="2">
    <location>
        <begin position="1"/>
        <end position="124"/>
    </location>
</feature>
<feature type="region of interest" description="Regulatory domain" evidence="1">
    <location>
        <begin position="250"/>
        <end position="375"/>
    </location>
</feature>
<feature type="binding site" evidence="1">
    <location>
        <position position="59"/>
    </location>
    <ligand>
        <name>Mn(2+)</name>
        <dbReference type="ChEBI" id="CHEBI:29035"/>
    </ligand>
</feature>
<feature type="binding site" evidence="1">
    <location>
        <position position="61"/>
    </location>
    <ligand>
        <name>Mn(2+)</name>
        <dbReference type="ChEBI" id="CHEBI:29035"/>
    </ligand>
</feature>
<feature type="binding site" evidence="1">
    <location>
        <position position="95"/>
    </location>
    <ligand>
        <name>Mn(2+)</name>
        <dbReference type="ChEBI" id="CHEBI:29035"/>
    </ligand>
</feature>
<feature type="non-terminal residue">
    <location>
        <position position="1"/>
    </location>
</feature>
<name>LEU1_BUCTS</name>
<accession>O31287</accession>
<evidence type="ECO:0000250" key="1">
    <source>
        <dbReference type="UniProtKB" id="Q9JZG1"/>
    </source>
</evidence>
<evidence type="ECO:0000255" key="2">
    <source>
        <dbReference type="PROSITE-ProRule" id="PRU01151"/>
    </source>
</evidence>
<evidence type="ECO:0000303" key="3">
    <source>
    </source>
</evidence>
<evidence type="ECO:0000305" key="4"/>
<keyword id="KW-0028">Amino-acid biosynthesis</keyword>
<keyword id="KW-0100">Branched-chain amino acid biosynthesis</keyword>
<keyword id="KW-0963">Cytoplasm</keyword>
<keyword id="KW-0432">Leucine biosynthesis</keyword>
<keyword id="KW-0464">Manganese</keyword>
<keyword id="KW-0479">Metal-binding</keyword>
<keyword id="KW-0614">Plasmid</keyword>
<keyword id="KW-0808">Transferase</keyword>
<gene>
    <name evidence="3" type="primary">leuA</name>
</gene>
<protein>
    <recommendedName>
        <fullName evidence="1">2-isopropylmalate synthase</fullName>
        <ecNumber evidence="1">2.3.3.13</ecNumber>
    </recommendedName>
    <alternativeName>
        <fullName evidence="1">Alpha-IPM synthase</fullName>
    </alternativeName>
    <alternativeName>
        <fullName evidence="1">Alpha-isopropylmalate synthase</fullName>
    </alternativeName>
</protein>
<geneLocation type="plasmid">
    <name>pBTs1</name>
</geneLocation>
<proteinExistence type="inferred from homology"/>
<sequence>GRTSIDNLCRIVESAIKAGATTINIPDTVGYTIPSQFKTIIKNLFNKVPNINNAIISAHCHDDLGLAVGNAIASIEAGVRQIEGTISGIGERAGNTALEEVILTIKLKEELLNVFTNIKHNELYRTSQLISQLCNTPIPANKSIIGSNAFAHSSGIHQDGILKNRANYEIIDPKTIGVKAVQLNLTSRSGRAAVKHHMHEMGYQDDDYDLNQLYVNFLKLADKKGQVFDYDLEALAFISNQEDKDQEHFQLKYFSIHSGSTGVSTASVKLLCGNKILNEIITTRNGPINSIYQALNNIAGLPIVLEKFHLVGKGEGRDALGQVDIVVKYNNRKFHGIGLATDIIESSIKAMLNVLNNIWLSNKIKSKIKNIKNKK</sequence>
<reference key="1">
    <citation type="journal article" date="1997" name="J. Bacteriol.">
        <title>Putative evolutionary origin of plasmids carrying the genes involved in leucine biosynthesis in Buchnera aphidicola (endosymbiont of aphids).</title>
        <authorList>
            <person name="van Ham R.C.H.J."/>
            <person name="Moya A."/>
            <person name="Latorre A."/>
        </authorList>
    </citation>
    <scope>NUCLEOTIDE SEQUENCE [GENOMIC DNA]</scope>
</reference>
<dbReference type="EC" id="2.3.3.13" evidence="1"/>
<dbReference type="EMBL" id="Y11966">
    <property type="protein sequence ID" value="CAA72697.1"/>
    <property type="molecule type" value="Genomic_DNA"/>
</dbReference>
<dbReference type="SMR" id="O31287"/>
<dbReference type="UniPathway" id="UPA00048">
    <property type="reaction ID" value="UER00070"/>
</dbReference>
<dbReference type="GO" id="GO:0005829">
    <property type="term" value="C:cytosol"/>
    <property type="evidence" value="ECO:0007669"/>
    <property type="project" value="TreeGrafter"/>
</dbReference>
<dbReference type="GO" id="GO:0003852">
    <property type="term" value="F:2-isopropylmalate synthase activity"/>
    <property type="evidence" value="ECO:0007669"/>
    <property type="project" value="UniProtKB-EC"/>
</dbReference>
<dbReference type="GO" id="GO:0046872">
    <property type="term" value="F:metal ion binding"/>
    <property type="evidence" value="ECO:0007669"/>
    <property type="project" value="UniProtKB-KW"/>
</dbReference>
<dbReference type="GO" id="GO:0009098">
    <property type="term" value="P:L-leucine biosynthetic process"/>
    <property type="evidence" value="ECO:0007669"/>
    <property type="project" value="UniProtKB-UniPathway"/>
</dbReference>
<dbReference type="FunFam" id="1.10.238.260:FF:000001">
    <property type="entry name" value="2-isopropylmalate synthase"/>
    <property type="match status" value="1"/>
</dbReference>
<dbReference type="Gene3D" id="1.10.238.260">
    <property type="match status" value="1"/>
</dbReference>
<dbReference type="Gene3D" id="3.30.160.270">
    <property type="match status" value="1"/>
</dbReference>
<dbReference type="Gene3D" id="3.20.20.70">
    <property type="entry name" value="Aldolase class I"/>
    <property type="match status" value="1"/>
</dbReference>
<dbReference type="InterPro" id="IPR050073">
    <property type="entry name" value="2-IPM_HCS-like"/>
</dbReference>
<dbReference type="InterPro" id="IPR013709">
    <property type="entry name" value="2-isopropylmalate_synth_dimer"/>
</dbReference>
<dbReference type="InterPro" id="IPR002034">
    <property type="entry name" value="AIPM/Hcit_synth_CS"/>
</dbReference>
<dbReference type="InterPro" id="IPR013785">
    <property type="entry name" value="Aldolase_TIM"/>
</dbReference>
<dbReference type="InterPro" id="IPR054691">
    <property type="entry name" value="LeuA/HCS_post-cat"/>
</dbReference>
<dbReference type="InterPro" id="IPR036230">
    <property type="entry name" value="LeuA_allosteric_dom_sf"/>
</dbReference>
<dbReference type="InterPro" id="IPR000891">
    <property type="entry name" value="PYR_CT"/>
</dbReference>
<dbReference type="PANTHER" id="PTHR10277:SF9">
    <property type="entry name" value="2-ISOPROPYLMALATE SYNTHASE 1, CHLOROPLASTIC-RELATED"/>
    <property type="match status" value="1"/>
</dbReference>
<dbReference type="PANTHER" id="PTHR10277">
    <property type="entry name" value="HOMOCITRATE SYNTHASE-RELATED"/>
    <property type="match status" value="1"/>
</dbReference>
<dbReference type="Pfam" id="PF22617">
    <property type="entry name" value="HCS_D2"/>
    <property type="match status" value="1"/>
</dbReference>
<dbReference type="Pfam" id="PF00682">
    <property type="entry name" value="HMGL-like"/>
    <property type="match status" value="1"/>
</dbReference>
<dbReference type="Pfam" id="PF08502">
    <property type="entry name" value="LeuA_dimer"/>
    <property type="match status" value="1"/>
</dbReference>
<dbReference type="SMART" id="SM00917">
    <property type="entry name" value="LeuA_dimer"/>
    <property type="match status" value="1"/>
</dbReference>
<dbReference type="SUPFAM" id="SSF110921">
    <property type="entry name" value="2-isopropylmalate synthase LeuA, allosteric (dimerisation) domain"/>
    <property type="match status" value="1"/>
</dbReference>
<dbReference type="SUPFAM" id="SSF51569">
    <property type="entry name" value="Aldolase"/>
    <property type="match status" value="1"/>
</dbReference>
<dbReference type="PROSITE" id="PS00816">
    <property type="entry name" value="AIPM_HOMOCIT_SYNTH_2"/>
    <property type="match status" value="1"/>
</dbReference>
<dbReference type="PROSITE" id="PS50991">
    <property type="entry name" value="PYR_CT"/>
    <property type="match status" value="1"/>
</dbReference>
<comment type="function">
    <text evidence="1">Catalyzes the condensation of the acetyl group of acetyl-CoA with 3-methyl-2-oxobutanoate (2-ketoisovalerate) to form 3-carboxy-3-hydroxy-4-methylpentanoate (2-isopropylmalate).</text>
</comment>
<comment type="catalytic activity">
    <reaction evidence="1">
        <text>3-methyl-2-oxobutanoate + acetyl-CoA + H2O = (2S)-2-isopropylmalate + CoA + H(+)</text>
        <dbReference type="Rhea" id="RHEA:21524"/>
        <dbReference type="ChEBI" id="CHEBI:1178"/>
        <dbReference type="ChEBI" id="CHEBI:11851"/>
        <dbReference type="ChEBI" id="CHEBI:15377"/>
        <dbReference type="ChEBI" id="CHEBI:15378"/>
        <dbReference type="ChEBI" id="CHEBI:57287"/>
        <dbReference type="ChEBI" id="CHEBI:57288"/>
        <dbReference type="EC" id="2.3.3.13"/>
    </reaction>
</comment>
<comment type="pathway">
    <text evidence="1">Amino-acid biosynthesis; L-leucine biosynthesis; L-leucine from 3-methyl-2-oxobutanoate: step 1/4.</text>
</comment>
<comment type="subunit">
    <text evidence="1">Homodimer.</text>
</comment>
<comment type="subcellular location">
    <subcellularLocation>
        <location evidence="1">Cytoplasm</location>
    </subcellularLocation>
</comment>
<comment type="similarity">
    <text evidence="4">Belongs to the alpha-IPM synthase/homocitrate synthase family. LeuA type 1 subfamily.</text>
</comment>